<accession>Q2J779</accession>
<dbReference type="EC" id="3.4.21.88" evidence="1"/>
<dbReference type="EMBL" id="CP000249">
    <property type="protein sequence ID" value="ABD12863.1"/>
    <property type="molecule type" value="Genomic_DNA"/>
</dbReference>
<dbReference type="RefSeq" id="WP_011437888.1">
    <property type="nucleotide sequence ID" value="NZ_MSEA01000246.1"/>
</dbReference>
<dbReference type="SMR" id="Q2J779"/>
<dbReference type="STRING" id="106370.Francci3_3510"/>
<dbReference type="MEROPS" id="S24.001"/>
<dbReference type="KEGG" id="fra:Francci3_3510"/>
<dbReference type="eggNOG" id="COG1974">
    <property type="taxonomic scope" value="Bacteria"/>
</dbReference>
<dbReference type="HOGENOM" id="CLU_066192_45_0_11"/>
<dbReference type="OrthoDB" id="9802364at2"/>
<dbReference type="PhylomeDB" id="Q2J779"/>
<dbReference type="Proteomes" id="UP000001937">
    <property type="component" value="Chromosome"/>
</dbReference>
<dbReference type="GO" id="GO:0003677">
    <property type="term" value="F:DNA binding"/>
    <property type="evidence" value="ECO:0007669"/>
    <property type="project" value="UniProtKB-UniRule"/>
</dbReference>
<dbReference type="GO" id="GO:0004252">
    <property type="term" value="F:serine-type endopeptidase activity"/>
    <property type="evidence" value="ECO:0007669"/>
    <property type="project" value="UniProtKB-UniRule"/>
</dbReference>
<dbReference type="GO" id="GO:0006281">
    <property type="term" value="P:DNA repair"/>
    <property type="evidence" value="ECO:0007669"/>
    <property type="project" value="UniProtKB-UniRule"/>
</dbReference>
<dbReference type="GO" id="GO:0006260">
    <property type="term" value="P:DNA replication"/>
    <property type="evidence" value="ECO:0007669"/>
    <property type="project" value="UniProtKB-UniRule"/>
</dbReference>
<dbReference type="GO" id="GO:0045892">
    <property type="term" value="P:negative regulation of DNA-templated transcription"/>
    <property type="evidence" value="ECO:0007669"/>
    <property type="project" value="UniProtKB-UniRule"/>
</dbReference>
<dbReference type="GO" id="GO:0006508">
    <property type="term" value="P:proteolysis"/>
    <property type="evidence" value="ECO:0007669"/>
    <property type="project" value="InterPro"/>
</dbReference>
<dbReference type="GO" id="GO:0009432">
    <property type="term" value="P:SOS response"/>
    <property type="evidence" value="ECO:0007669"/>
    <property type="project" value="UniProtKB-UniRule"/>
</dbReference>
<dbReference type="CDD" id="cd06529">
    <property type="entry name" value="S24_LexA-like"/>
    <property type="match status" value="1"/>
</dbReference>
<dbReference type="FunFam" id="1.10.10.10:FF:000009">
    <property type="entry name" value="LexA repressor"/>
    <property type="match status" value="1"/>
</dbReference>
<dbReference type="FunFam" id="2.10.109.10:FF:000001">
    <property type="entry name" value="LexA repressor"/>
    <property type="match status" value="1"/>
</dbReference>
<dbReference type="Gene3D" id="2.10.109.10">
    <property type="entry name" value="Umud Fragment, subunit A"/>
    <property type="match status" value="1"/>
</dbReference>
<dbReference type="Gene3D" id="1.10.10.10">
    <property type="entry name" value="Winged helix-like DNA-binding domain superfamily/Winged helix DNA-binding domain"/>
    <property type="match status" value="1"/>
</dbReference>
<dbReference type="HAMAP" id="MF_00015">
    <property type="entry name" value="LexA"/>
    <property type="match status" value="1"/>
</dbReference>
<dbReference type="InterPro" id="IPR006200">
    <property type="entry name" value="LexA"/>
</dbReference>
<dbReference type="InterPro" id="IPR039418">
    <property type="entry name" value="LexA-like"/>
</dbReference>
<dbReference type="InterPro" id="IPR036286">
    <property type="entry name" value="LexA/Signal_pep-like_sf"/>
</dbReference>
<dbReference type="InterPro" id="IPR006199">
    <property type="entry name" value="LexA_DNA-bd_dom"/>
</dbReference>
<dbReference type="InterPro" id="IPR050077">
    <property type="entry name" value="LexA_repressor"/>
</dbReference>
<dbReference type="InterPro" id="IPR006197">
    <property type="entry name" value="Peptidase_S24_LexA"/>
</dbReference>
<dbReference type="InterPro" id="IPR015927">
    <property type="entry name" value="Peptidase_S24_S26A/B/C"/>
</dbReference>
<dbReference type="InterPro" id="IPR036388">
    <property type="entry name" value="WH-like_DNA-bd_sf"/>
</dbReference>
<dbReference type="InterPro" id="IPR036390">
    <property type="entry name" value="WH_DNA-bd_sf"/>
</dbReference>
<dbReference type="NCBIfam" id="TIGR00498">
    <property type="entry name" value="lexA"/>
    <property type="match status" value="1"/>
</dbReference>
<dbReference type="PANTHER" id="PTHR33516">
    <property type="entry name" value="LEXA REPRESSOR"/>
    <property type="match status" value="1"/>
</dbReference>
<dbReference type="PANTHER" id="PTHR33516:SF2">
    <property type="entry name" value="LEXA REPRESSOR-RELATED"/>
    <property type="match status" value="1"/>
</dbReference>
<dbReference type="Pfam" id="PF01726">
    <property type="entry name" value="LexA_DNA_bind"/>
    <property type="match status" value="1"/>
</dbReference>
<dbReference type="Pfam" id="PF00717">
    <property type="entry name" value="Peptidase_S24"/>
    <property type="match status" value="1"/>
</dbReference>
<dbReference type="PRINTS" id="PR00726">
    <property type="entry name" value="LEXASERPTASE"/>
</dbReference>
<dbReference type="SUPFAM" id="SSF51306">
    <property type="entry name" value="LexA/Signal peptidase"/>
    <property type="match status" value="1"/>
</dbReference>
<dbReference type="SUPFAM" id="SSF46785">
    <property type="entry name" value="Winged helix' DNA-binding domain"/>
    <property type="match status" value="1"/>
</dbReference>
<protein>
    <recommendedName>
        <fullName evidence="1">LexA repressor</fullName>
        <ecNumber evidence="1">3.4.21.88</ecNumber>
    </recommendedName>
</protein>
<name>LEXA_FRACC</name>
<keyword id="KW-0068">Autocatalytic cleavage</keyword>
<keyword id="KW-0227">DNA damage</keyword>
<keyword id="KW-0234">DNA repair</keyword>
<keyword id="KW-0235">DNA replication</keyword>
<keyword id="KW-0238">DNA-binding</keyword>
<keyword id="KW-0378">Hydrolase</keyword>
<keyword id="KW-1185">Reference proteome</keyword>
<keyword id="KW-0678">Repressor</keyword>
<keyword id="KW-0742">SOS response</keyword>
<keyword id="KW-0804">Transcription</keyword>
<keyword id="KW-0805">Transcription regulation</keyword>
<feature type="chain" id="PRO_0000322733" description="LexA repressor">
    <location>
        <begin position="1"/>
        <end position="256"/>
    </location>
</feature>
<feature type="DNA-binding region" description="H-T-H motif" evidence="1">
    <location>
        <begin position="53"/>
        <end position="73"/>
    </location>
</feature>
<feature type="region of interest" description="Disordered" evidence="2">
    <location>
        <begin position="1"/>
        <end position="31"/>
    </location>
</feature>
<feature type="active site" description="For autocatalytic cleavage activity" evidence="1">
    <location>
        <position position="180"/>
    </location>
</feature>
<feature type="active site" description="For autocatalytic cleavage activity" evidence="1">
    <location>
        <position position="217"/>
    </location>
</feature>
<feature type="site" description="Cleavage; by autolysis" evidence="1">
    <location>
        <begin position="145"/>
        <end position="146"/>
    </location>
</feature>
<reference key="1">
    <citation type="journal article" date="2007" name="Genome Res.">
        <title>Genome characteristics of facultatively symbiotic Frankia sp. strains reflect host range and host plant biogeography.</title>
        <authorList>
            <person name="Normand P."/>
            <person name="Lapierre P."/>
            <person name="Tisa L.S."/>
            <person name="Gogarten J.P."/>
            <person name="Alloisio N."/>
            <person name="Bagnarol E."/>
            <person name="Bassi C.A."/>
            <person name="Berry A.M."/>
            <person name="Bickhart D.M."/>
            <person name="Choisne N."/>
            <person name="Couloux A."/>
            <person name="Cournoyer B."/>
            <person name="Cruveiller S."/>
            <person name="Daubin V."/>
            <person name="Demange N."/>
            <person name="Francino M.P."/>
            <person name="Goltsman E."/>
            <person name="Huang Y."/>
            <person name="Kopp O.R."/>
            <person name="Labarre L."/>
            <person name="Lapidus A."/>
            <person name="Lavire C."/>
            <person name="Marechal J."/>
            <person name="Martinez M."/>
            <person name="Mastronunzio J.E."/>
            <person name="Mullin B.C."/>
            <person name="Niemann J."/>
            <person name="Pujic P."/>
            <person name="Rawnsley T."/>
            <person name="Rouy Z."/>
            <person name="Schenowitz C."/>
            <person name="Sellstedt A."/>
            <person name="Tavares F."/>
            <person name="Tomkins J.P."/>
            <person name="Vallenet D."/>
            <person name="Valverde C."/>
            <person name="Wall L.G."/>
            <person name="Wang Y."/>
            <person name="Medigue C."/>
            <person name="Benson D.R."/>
        </authorList>
    </citation>
    <scope>NUCLEOTIDE SEQUENCE [LARGE SCALE GENOMIC DNA]</scope>
    <source>
        <strain>DSM 45818 / CECT 9043 / HFP020203 / CcI3</strain>
    </source>
</reference>
<gene>
    <name evidence="1" type="primary">lexA</name>
    <name type="ordered locus">Francci3_3510</name>
</gene>
<organism>
    <name type="scientific">Frankia casuarinae (strain DSM 45818 / CECT 9043 / HFP020203 / CcI3)</name>
    <dbReference type="NCBI Taxonomy" id="106370"/>
    <lineage>
        <taxon>Bacteria</taxon>
        <taxon>Bacillati</taxon>
        <taxon>Actinomycetota</taxon>
        <taxon>Actinomycetes</taxon>
        <taxon>Frankiales</taxon>
        <taxon>Frankiaceae</taxon>
        <taxon>Frankia</taxon>
    </lineage>
</organism>
<evidence type="ECO:0000255" key="1">
    <source>
        <dbReference type="HAMAP-Rule" id="MF_00015"/>
    </source>
</evidence>
<evidence type="ECO:0000256" key="2">
    <source>
        <dbReference type="SAM" id="MobiDB-lite"/>
    </source>
</evidence>
<proteinExistence type="inferred from homology"/>
<sequence length="256" mass="27302">MTSQGRGTRRGGTRGNVRAFPEGPTDAGLTPRQRRVLEVIRAAVERRGYPPSVREIGEAVGLTSTSSVAHQLKVLEEKGYLRRDPNRPRAMEVLTVEHPRQRADVGAGATTVAGTIPIVGEAAPGTTEGSKSDAAYVPVLGRIAAGGPILAEQAVEDVFPLPREIVGEGTLFLLRVVGDSMINAAICDGDWVVVRQQPVADNGEIVAAMIDGEATVKRLRVRDGKIWLHPENSAFADIPGEDATILGRIVAVLRRV</sequence>
<comment type="function">
    <text evidence="1">Represses a number of genes involved in the response to DNA damage (SOS response), including recA and lexA. In the presence of single-stranded DNA, RecA interacts with LexA causing an autocatalytic cleavage which disrupts the DNA-binding part of LexA, leading to derepression of the SOS regulon and eventually DNA repair.</text>
</comment>
<comment type="catalytic activity">
    <reaction evidence="1">
        <text>Hydrolysis of Ala-|-Gly bond in repressor LexA.</text>
        <dbReference type="EC" id="3.4.21.88"/>
    </reaction>
</comment>
<comment type="subunit">
    <text evidence="1">Homodimer.</text>
</comment>
<comment type="similarity">
    <text evidence="1">Belongs to the peptidase S24 family.</text>
</comment>